<comment type="function">
    <text evidence="1">Catalyzes the NADPH-dependent reduction of 7-cyano-7-deazaguanine (preQ0) to 7-aminomethyl-7-deazaguanine (preQ1).</text>
</comment>
<comment type="catalytic activity">
    <reaction evidence="1">
        <text>7-aminomethyl-7-carbaguanine + 2 NADP(+) = 7-cyano-7-deazaguanine + 2 NADPH + 3 H(+)</text>
        <dbReference type="Rhea" id="RHEA:13409"/>
        <dbReference type="ChEBI" id="CHEBI:15378"/>
        <dbReference type="ChEBI" id="CHEBI:45075"/>
        <dbReference type="ChEBI" id="CHEBI:57783"/>
        <dbReference type="ChEBI" id="CHEBI:58349"/>
        <dbReference type="ChEBI" id="CHEBI:58703"/>
        <dbReference type="EC" id="1.7.1.13"/>
    </reaction>
</comment>
<comment type="pathway">
    <text evidence="1">tRNA modification; tRNA-queuosine biosynthesis.</text>
</comment>
<comment type="subcellular location">
    <subcellularLocation>
        <location evidence="1">Cytoplasm</location>
    </subcellularLocation>
</comment>
<comment type="similarity">
    <text evidence="1">Belongs to the GTP cyclohydrolase I family. QueF type 1 subfamily.</text>
</comment>
<comment type="sequence caution" evidence="2">
    <conflict type="erroneous initiation">
        <sequence resource="EMBL-CDS" id="AAU40431"/>
    </conflict>
</comment>
<gene>
    <name evidence="1" type="primary">queF</name>
    <name type="ordered locus">BLi01530</name>
    <name type="ordered locus">BL03549</name>
</gene>
<accession>Q65KI3</accession>
<accession>Q62VY1</accession>
<proteinExistence type="inferred from homology"/>
<sequence length="165" mass="19406">MTTRKDSELEGVTLLGNQGTNYLFDYSPEVLESFPNKHENRDYFVKFNCPEFTSLCPKTGQPDFATIYISYIPDKKMVESKSLKLYLFSFRNHGDFHEDCMNIIMNDLIELMDPRYIEVWGKFTPRGGISIDPYTNYGKPGTKYEKMAEYRMMNHDLYPETIDNR</sequence>
<name>QUEF_BACLD</name>
<evidence type="ECO:0000255" key="1">
    <source>
        <dbReference type="HAMAP-Rule" id="MF_00818"/>
    </source>
</evidence>
<evidence type="ECO:0000305" key="2"/>
<organism>
    <name type="scientific">Bacillus licheniformis (strain ATCC 14580 / DSM 13 / JCM 2505 / CCUG 7422 / NBRC 12200 / NCIMB 9375 / NCTC 10341 / NRRL NRS-1264 / Gibson 46)</name>
    <dbReference type="NCBI Taxonomy" id="279010"/>
    <lineage>
        <taxon>Bacteria</taxon>
        <taxon>Bacillati</taxon>
        <taxon>Bacillota</taxon>
        <taxon>Bacilli</taxon>
        <taxon>Bacillales</taxon>
        <taxon>Bacillaceae</taxon>
        <taxon>Bacillus</taxon>
    </lineage>
</organism>
<feature type="chain" id="PRO_0000162956" description="NADPH-dependent 7-cyano-7-deazaguanine reductase">
    <location>
        <begin position="1"/>
        <end position="165"/>
    </location>
</feature>
<feature type="active site" description="Thioimide intermediate" evidence="1">
    <location>
        <position position="56"/>
    </location>
</feature>
<feature type="active site" description="Proton donor" evidence="1">
    <location>
        <position position="63"/>
    </location>
</feature>
<feature type="binding site" evidence="1">
    <location>
        <begin position="78"/>
        <end position="80"/>
    </location>
    <ligand>
        <name>substrate</name>
    </ligand>
</feature>
<feature type="binding site" evidence="1">
    <location>
        <begin position="97"/>
        <end position="98"/>
    </location>
    <ligand>
        <name>substrate</name>
    </ligand>
</feature>
<reference key="1">
    <citation type="journal article" date="2004" name="J. Mol. Microbiol. Biotechnol.">
        <title>The complete genome sequence of Bacillus licheniformis DSM13, an organism with great industrial potential.</title>
        <authorList>
            <person name="Veith B."/>
            <person name="Herzberg C."/>
            <person name="Steckel S."/>
            <person name="Feesche J."/>
            <person name="Maurer K.H."/>
            <person name="Ehrenreich P."/>
            <person name="Baeumer S."/>
            <person name="Henne A."/>
            <person name="Liesegang H."/>
            <person name="Merkl R."/>
            <person name="Ehrenreich A."/>
            <person name="Gottschalk G."/>
        </authorList>
    </citation>
    <scope>NUCLEOTIDE SEQUENCE [LARGE SCALE GENOMIC DNA]</scope>
    <source>
        <strain>ATCC 14580 / DSM 13 / JCM 2505 / CCUG 7422 / NBRC 12200 / NCIMB 9375 / NCTC 10341 / NRRL NRS-1264 / Gibson 46</strain>
    </source>
</reference>
<reference key="2">
    <citation type="journal article" date="2004" name="Genome Biol.">
        <title>Complete genome sequence of the industrial bacterium Bacillus licheniformis and comparisons with closely related Bacillus species.</title>
        <authorList>
            <person name="Rey M.W."/>
            <person name="Ramaiya P."/>
            <person name="Nelson B.A."/>
            <person name="Brody-Karpin S.D."/>
            <person name="Zaretsky E.J."/>
            <person name="Tang M."/>
            <person name="Lopez de Leon A."/>
            <person name="Xiang H."/>
            <person name="Gusti V."/>
            <person name="Clausen I.G."/>
            <person name="Olsen P.B."/>
            <person name="Rasmussen M.D."/>
            <person name="Andersen J.T."/>
            <person name="Joergensen P.L."/>
            <person name="Larsen T.S."/>
            <person name="Sorokin A."/>
            <person name="Bolotin A."/>
            <person name="Lapidus A."/>
            <person name="Galleron N."/>
            <person name="Ehrlich S.D."/>
            <person name="Berka R.M."/>
        </authorList>
    </citation>
    <scope>NUCLEOTIDE SEQUENCE [LARGE SCALE GENOMIC DNA]</scope>
    <source>
        <strain>ATCC 14580 / DSM 13 / JCM 2505 / CCUG 7422 / NBRC 12200 / NCIMB 9375 / NCTC 10341 / NRRL NRS-1264 / Gibson 46</strain>
    </source>
</reference>
<protein>
    <recommendedName>
        <fullName evidence="1">NADPH-dependent 7-cyano-7-deazaguanine reductase</fullName>
        <ecNumber evidence="1">1.7.1.13</ecNumber>
    </recommendedName>
    <alternativeName>
        <fullName evidence="1">7-cyano-7-carbaguanine reductase</fullName>
    </alternativeName>
    <alternativeName>
        <fullName evidence="1">NADPH-dependent nitrile oxidoreductase</fullName>
    </alternativeName>
    <alternativeName>
        <fullName evidence="1">PreQ(0) reductase</fullName>
    </alternativeName>
</protein>
<dbReference type="EC" id="1.7.1.13" evidence="1"/>
<dbReference type="EMBL" id="AE017333">
    <property type="protein sequence ID" value="AAU40431.1"/>
    <property type="status" value="ALT_INIT"/>
    <property type="molecule type" value="Genomic_DNA"/>
</dbReference>
<dbReference type="EMBL" id="CP000002">
    <property type="protein sequence ID" value="AAU23077.1"/>
    <property type="molecule type" value="Genomic_DNA"/>
</dbReference>
<dbReference type="RefSeq" id="WP_009328607.1">
    <property type="nucleotide sequence ID" value="NC_006322.1"/>
</dbReference>
<dbReference type="SMR" id="Q65KI3"/>
<dbReference type="STRING" id="279010.BL03549"/>
<dbReference type="GeneID" id="92861879"/>
<dbReference type="KEGG" id="bld:BLi01530"/>
<dbReference type="KEGG" id="bli:BL03549"/>
<dbReference type="eggNOG" id="COG0780">
    <property type="taxonomic scope" value="Bacteria"/>
</dbReference>
<dbReference type="HOGENOM" id="CLU_102489_0_1_9"/>
<dbReference type="UniPathway" id="UPA00392"/>
<dbReference type="Proteomes" id="UP000000606">
    <property type="component" value="Chromosome"/>
</dbReference>
<dbReference type="GO" id="GO:0005737">
    <property type="term" value="C:cytoplasm"/>
    <property type="evidence" value="ECO:0007669"/>
    <property type="project" value="UniProtKB-SubCell"/>
</dbReference>
<dbReference type="GO" id="GO:0033739">
    <property type="term" value="F:preQ1 synthase activity"/>
    <property type="evidence" value="ECO:0007669"/>
    <property type="project" value="UniProtKB-UniRule"/>
</dbReference>
<dbReference type="GO" id="GO:0008616">
    <property type="term" value="P:queuosine biosynthetic process"/>
    <property type="evidence" value="ECO:0007669"/>
    <property type="project" value="UniProtKB-UniRule"/>
</dbReference>
<dbReference type="GO" id="GO:0006400">
    <property type="term" value="P:tRNA modification"/>
    <property type="evidence" value="ECO:0007669"/>
    <property type="project" value="UniProtKB-UniRule"/>
</dbReference>
<dbReference type="Gene3D" id="3.30.1130.10">
    <property type="match status" value="1"/>
</dbReference>
<dbReference type="HAMAP" id="MF_00818">
    <property type="entry name" value="QueF_type1"/>
    <property type="match status" value="1"/>
</dbReference>
<dbReference type="InterPro" id="IPR043133">
    <property type="entry name" value="GTP-CH-I_C/QueF"/>
</dbReference>
<dbReference type="InterPro" id="IPR050084">
    <property type="entry name" value="NADPH_dep_7-cyano-7-deazaG_red"/>
</dbReference>
<dbReference type="InterPro" id="IPR029500">
    <property type="entry name" value="QueF"/>
</dbReference>
<dbReference type="InterPro" id="IPR016856">
    <property type="entry name" value="QueF_type1"/>
</dbReference>
<dbReference type="NCBIfam" id="TIGR03139">
    <property type="entry name" value="QueF-II"/>
    <property type="match status" value="1"/>
</dbReference>
<dbReference type="PANTHER" id="PTHR34354">
    <property type="entry name" value="NADPH-DEPENDENT 7-CYANO-7-DEAZAGUANINE REDUCTASE"/>
    <property type="match status" value="1"/>
</dbReference>
<dbReference type="PANTHER" id="PTHR34354:SF1">
    <property type="entry name" value="NADPH-DEPENDENT 7-CYANO-7-DEAZAGUANINE REDUCTASE"/>
    <property type="match status" value="1"/>
</dbReference>
<dbReference type="Pfam" id="PF14489">
    <property type="entry name" value="QueF"/>
    <property type="match status" value="1"/>
</dbReference>
<dbReference type="PIRSF" id="PIRSF027377">
    <property type="entry name" value="Nitrile_oxidored_QueF"/>
    <property type="match status" value="1"/>
</dbReference>
<dbReference type="SUPFAM" id="SSF55620">
    <property type="entry name" value="Tetrahydrobiopterin biosynthesis enzymes-like"/>
    <property type="match status" value="1"/>
</dbReference>
<keyword id="KW-0963">Cytoplasm</keyword>
<keyword id="KW-0521">NADP</keyword>
<keyword id="KW-0560">Oxidoreductase</keyword>
<keyword id="KW-0671">Queuosine biosynthesis</keyword>
<keyword id="KW-1185">Reference proteome</keyword>